<proteinExistence type="evidence at protein level"/>
<feature type="signal peptide" evidence="2">
    <location>
        <begin position="1"/>
        <end position="18"/>
    </location>
</feature>
<feature type="propeptide" id="PRO_0000294998" evidence="4 5">
    <location>
        <begin position="19"/>
        <end position="24"/>
    </location>
</feature>
<feature type="chain" id="PRO_0000088741" description="Venom plasminogen activator LV-PA">
    <location>
        <begin position="25"/>
        <end position="258"/>
    </location>
</feature>
<feature type="domain" description="Peptidase S1" evidence="3">
    <location>
        <begin position="25"/>
        <end position="249"/>
    </location>
</feature>
<feature type="active site" description="Charge relay system" evidence="1">
    <location>
        <position position="65"/>
    </location>
</feature>
<feature type="active site" description="Charge relay system" evidence="1">
    <location>
        <position position="110"/>
    </location>
</feature>
<feature type="active site" description="Charge relay system" evidence="1">
    <location>
        <position position="204"/>
    </location>
</feature>
<feature type="glycosylation site" description="N-linked (GlcNAc...) asparagine" evidence="2">
    <location>
        <position position="44"/>
    </location>
</feature>
<feature type="disulfide bond" evidence="3">
    <location>
        <begin position="50"/>
        <end position="66"/>
    </location>
</feature>
<feature type="disulfide bond" evidence="3">
    <location>
        <begin position="142"/>
        <end position="210"/>
    </location>
</feature>
<feature type="disulfide bond" evidence="3">
    <location>
        <begin position="174"/>
        <end position="189"/>
    </location>
</feature>
<feature type="disulfide bond" evidence="3">
    <location>
        <begin position="200"/>
        <end position="225"/>
    </location>
</feature>
<feature type="sequence conflict" description="In Ref. 3; AA sequence." evidence="6" ref="3">
    <original>S</original>
    <variation>N</variation>
    <location>
        <position position="46"/>
    </location>
</feature>
<feature type="sequence conflict" description="In Ref. 1; AA sequence." evidence="6" ref="1">
    <original>L</original>
    <variation>V</variation>
    <location>
        <position position="75"/>
    </location>
</feature>
<feature type="sequence conflict" description="In Ref. 1; AA sequence." evidence="6" ref="1">
    <original>NDE</original>
    <variation>DEM</variation>
    <location>
        <begin position="104"/>
        <end position="106"/>
    </location>
</feature>
<feature type="sequence conflict" description="In Ref. 1; AA sequence." evidence="6" ref="1">
    <original>A</original>
    <variation>E</variation>
    <location>
        <position position="127"/>
    </location>
</feature>
<feature type="sequence conflict" description="In Ref. 1; AA sequence." evidence="6" ref="1">
    <original>T</original>
    <variation>K</variation>
    <location>
        <position position="149"/>
    </location>
</feature>
<feature type="sequence conflict" description="In Ref. 1; AA sequence." evidence="6" ref="1">
    <original>AYSGWL</original>
    <variation>IYPEFGLP</variation>
    <location>
        <begin position="177"/>
        <end position="182"/>
    </location>
</feature>
<feature type="sequence conflict" description="In Ref. 1; AA sequence." evidence="6" ref="1">
    <original>TT</original>
    <variation>RV</variation>
    <location>
        <begin position="186"/>
        <end position="187"/>
    </location>
</feature>
<feature type="sequence conflict" description="In Ref. 1; AA sequence." evidence="6" ref="1">
    <original>E</original>
    <variation>K</variation>
    <location>
        <position position="230"/>
    </location>
</feature>
<comment type="function">
    <text evidence="4 5">Snake venom serine protease that activates plasminogen. Weakly hydrolyzes the alpha chain of human fibrinogen without releasing fibrinopeptide A. Does not hydrolyze plasma kallikrein or factor Xa. Does not clot fibrinogen. Does not affect platelet function. Induces hypotensive effects on rats. Shows a preferential cleavage at Lys-|-Xaa over Arg-|-Xaa bonds.</text>
</comment>
<comment type="activity regulation">
    <text evidence="4">Inhibited by the serine protease inhibitors NPGB, PMSF, p-aminobenzamidine and aprotinin. Not inhibited by soybean trypsin inhibitor or EDTA.</text>
</comment>
<comment type="biophysicochemical properties">
    <kinetics>
        <KM evidence="5">174 uM for H-D-Val-Leu-Arg-pNA (S-2266)</KM>
        <KM evidence="5">131 uM for H-D-Val-Leu-Lys-pNA (S-2251)</KM>
        <KM evidence="5">67 uM for N-p-Tos-Gly-Pro-Lys-pNA</KM>
        <KM evidence="5">231 uM for H-D-Pro-Phe-Arg-pNA (S-2302)</KM>
    </kinetics>
</comment>
<comment type="subunit">
    <text evidence="5">Monomer.</text>
</comment>
<comment type="subcellular location">
    <subcellularLocation>
        <location evidence="5">Secreted</location>
    </subcellularLocation>
</comment>
<comment type="tissue specificity">
    <text evidence="5">Expressed by the venom gland.</text>
</comment>
<comment type="PTM">
    <text evidence="4 5">N-glycosylated. PubMed:17034951 shows that it contains approximately 10% carbohydrates, PubMed:10871053 shows that it contains approximately 20% carbohydrates.</text>
</comment>
<comment type="similarity">
    <text evidence="3">Belongs to the peptidase S1 family. Snake venom subfamily.</text>
</comment>
<evidence type="ECO:0000250" key="1"/>
<evidence type="ECO:0000255" key="2"/>
<evidence type="ECO:0000255" key="3">
    <source>
        <dbReference type="PROSITE-ProRule" id="PRU00274"/>
    </source>
</evidence>
<evidence type="ECO:0000269" key="4">
    <source>
    </source>
</evidence>
<evidence type="ECO:0000269" key="5">
    <source>
    </source>
</evidence>
<evidence type="ECO:0000305" key="6"/>
<accession>Q27J47</accession>
<accession>P84036</accession>
<sequence>MVLITVLANLLILQLSYAQKSSKLVFGGDECNINEHRSLVVLFNSSGFLCAGTLINKEWVLTAAHCDSENFQMQLGVHSKKVPNKDEETRDPKEKFICPNRKKNDEKDKDIMLIRLNRPVSNSEHIALLSLPSSPPSVGSVCRIMGWGTISPTKEIYPDVPHCADINILDHAVCRAAYSGWLATSTTLCAGILEGGKDSCHGDSGGPLICNGQFQGIVSLGRHPCGHPDEPGVYTKVFDYTDWIQSIIAGNTDAACPP</sequence>
<protein>
    <recommendedName>
        <fullName>Venom plasminogen activator LV-PA</fullName>
        <ecNumber>3.4.21.-</ecNumber>
    </recommendedName>
    <alternativeName>
        <fullName>LMUT0402S</fullName>
    </alternativeName>
    <alternativeName>
        <fullName>Plasminogen activating proteinase</fullName>
    </alternativeName>
    <alternativeName>
        <fullName>Snake venom serine protease</fullName>
        <shortName>SVSP</shortName>
    </alternativeName>
</protein>
<name>VSPPA_LACMU</name>
<organism>
    <name type="scientific">Lachesis muta muta</name>
    <name type="common">Bushmaster</name>
    <dbReference type="NCBI Taxonomy" id="8753"/>
    <lineage>
        <taxon>Eukaryota</taxon>
        <taxon>Metazoa</taxon>
        <taxon>Chordata</taxon>
        <taxon>Craniata</taxon>
        <taxon>Vertebrata</taxon>
        <taxon>Euteleostomi</taxon>
        <taxon>Lepidosauria</taxon>
        <taxon>Squamata</taxon>
        <taxon>Bifurcata</taxon>
        <taxon>Unidentata</taxon>
        <taxon>Episquamata</taxon>
        <taxon>Toxicofera</taxon>
        <taxon>Serpentes</taxon>
        <taxon>Colubroidea</taxon>
        <taxon>Viperidae</taxon>
        <taxon>Crotalinae</taxon>
        <taxon>Lachesis</taxon>
    </lineage>
</organism>
<reference key="1">
    <citation type="journal article" date="2006" name="Biochim. Biophys. Acta">
        <title>Biochemical characterization and molecular cloning of a plasminogen activator proteinase (LV-PA) from bushmaster snake venom.</title>
        <authorList>
            <person name="Sanchez E.F."/>
            <person name="Felicori L.F."/>
            <person name="Chavez-Olortegui C."/>
            <person name="Magalhaes H.B."/>
            <person name="Hermogenes A.L."/>
            <person name="Diniz M.R.V."/>
            <person name="Junqueira-de-Azevedo I.L.M."/>
            <person name="Magalhaes A."/>
            <person name="Richardson M."/>
        </authorList>
    </citation>
    <scope>NUCLEOTIDE SEQUENCE [MRNA]</scope>
    <scope>PROTEIN SEQUENCE OF 25-204 AND 223-258</scope>
    <scope>FUNCTION</scope>
    <scope>CATALYTIC ACTIVITY</scope>
    <scope>BIOPHYSICOCHEMICAL PROPERTIES</scope>
    <scope>SUBUNIT</scope>
    <scope>SUBCELLULAR LOCATION</scope>
    <scope>TISSUE SPECIFICITY</scope>
    <scope>GLYCOSYLATION</scope>
    <source>
        <tissue>Venom</tissue>
        <tissue>Venom gland</tissue>
    </source>
</reference>
<reference key="2">
    <citation type="journal article" date="2006" name="Genetics">
        <title>Lachesis muta (Viperidae) cDNAs reveal diverging pit viper molecules and scaffolds typical of cobra (Elapidae) venoms: implications for snake toxin repertoire evolution.</title>
        <authorList>
            <person name="Junqueira-de-Azevedo I.L.M."/>
            <person name="Ching A.T.C."/>
            <person name="Carvalho E."/>
            <person name="Faria F."/>
            <person name="Nishiyama M.Y. Jr."/>
            <person name="Ho P.L."/>
            <person name="Diniz M.R.V."/>
        </authorList>
    </citation>
    <scope>NUCLEOTIDE SEQUENCE [MRNA]</scope>
</reference>
<reference key="3">
    <citation type="journal article" date="2000" name="Arch. Biochem. Biophys.">
        <title>Isolation of a proteinase with plasminogen-activating activity from Lachesis muta muta (bushmaster) snake venom.</title>
        <authorList>
            <person name="Sanchez E.F."/>
            <person name="Santos C.I."/>
            <person name="Magalhaes A."/>
            <person name="Diniz C.R."/>
            <person name="Figueiredo S."/>
            <person name="Gilroy J."/>
            <person name="Richardson M."/>
        </authorList>
    </citation>
    <scope>PROTEIN SEQUENCE OF 25-64</scope>
    <scope>FUNCTION</scope>
    <scope>CATALYTIC ACTIVITY</scope>
    <scope>ACTIVITY REGULATION</scope>
    <scope>GLYCOSYLATION</scope>
    <source>
        <strain>Manaus</strain>
        <tissue>Venom</tissue>
    </source>
</reference>
<keyword id="KW-0903">Direct protein sequencing</keyword>
<keyword id="KW-1015">Disulfide bond</keyword>
<keyword id="KW-1205">Fibrinolytic toxin</keyword>
<keyword id="KW-0325">Glycoprotein</keyword>
<keyword id="KW-1199">Hemostasis impairing toxin</keyword>
<keyword id="KW-0378">Hydrolase</keyword>
<keyword id="KW-0382">Hypotensive agent</keyword>
<keyword id="KW-0617">Plasminogen activation</keyword>
<keyword id="KW-0645">Protease</keyword>
<keyword id="KW-0964">Secreted</keyword>
<keyword id="KW-0720">Serine protease</keyword>
<keyword id="KW-0732">Signal</keyword>
<keyword id="KW-0800">Toxin</keyword>
<dbReference type="EC" id="3.4.21.-"/>
<dbReference type="EMBL" id="DQ396477">
    <property type="protein sequence ID" value="ABD52886.1"/>
    <property type="molecule type" value="mRNA"/>
</dbReference>
<dbReference type="SMR" id="Q27J47"/>
<dbReference type="MEROPS" id="S01.497"/>
<dbReference type="SABIO-RK" id="Q27J47"/>
<dbReference type="GO" id="GO:0005576">
    <property type="term" value="C:extracellular region"/>
    <property type="evidence" value="ECO:0007669"/>
    <property type="project" value="UniProtKB-SubCell"/>
</dbReference>
<dbReference type="GO" id="GO:0030141">
    <property type="term" value="C:secretory granule"/>
    <property type="evidence" value="ECO:0007669"/>
    <property type="project" value="TreeGrafter"/>
</dbReference>
<dbReference type="GO" id="GO:0004252">
    <property type="term" value="F:serine-type endopeptidase activity"/>
    <property type="evidence" value="ECO:0007669"/>
    <property type="project" value="InterPro"/>
</dbReference>
<dbReference type="GO" id="GO:0090729">
    <property type="term" value="F:toxin activity"/>
    <property type="evidence" value="ECO:0007669"/>
    <property type="project" value="UniProtKB-KW"/>
</dbReference>
<dbReference type="GO" id="GO:0006508">
    <property type="term" value="P:proteolysis"/>
    <property type="evidence" value="ECO:0007669"/>
    <property type="project" value="UniProtKB-KW"/>
</dbReference>
<dbReference type="GO" id="GO:0008217">
    <property type="term" value="P:regulation of blood pressure"/>
    <property type="evidence" value="ECO:0007669"/>
    <property type="project" value="UniProtKB-KW"/>
</dbReference>
<dbReference type="CDD" id="cd00190">
    <property type="entry name" value="Tryp_SPc"/>
    <property type="match status" value="1"/>
</dbReference>
<dbReference type="FunFam" id="2.40.10.10:FF:000158">
    <property type="entry name" value="Thrombin-like enzyme saxthrombin"/>
    <property type="match status" value="1"/>
</dbReference>
<dbReference type="FunFam" id="2.40.10.10:FF:000153">
    <property type="entry name" value="Venom plasminogen activator TSV-PA"/>
    <property type="match status" value="1"/>
</dbReference>
<dbReference type="Gene3D" id="2.40.10.10">
    <property type="entry name" value="Trypsin-like serine proteases"/>
    <property type="match status" value="2"/>
</dbReference>
<dbReference type="InterPro" id="IPR009003">
    <property type="entry name" value="Peptidase_S1_PA"/>
</dbReference>
<dbReference type="InterPro" id="IPR043504">
    <property type="entry name" value="Peptidase_S1_PA_chymotrypsin"/>
</dbReference>
<dbReference type="InterPro" id="IPR001314">
    <property type="entry name" value="Peptidase_S1A"/>
</dbReference>
<dbReference type="InterPro" id="IPR001254">
    <property type="entry name" value="Trypsin_dom"/>
</dbReference>
<dbReference type="InterPro" id="IPR018114">
    <property type="entry name" value="TRYPSIN_HIS"/>
</dbReference>
<dbReference type="InterPro" id="IPR033116">
    <property type="entry name" value="TRYPSIN_SER"/>
</dbReference>
<dbReference type="PANTHER" id="PTHR24271:SF47">
    <property type="entry name" value="KALLIKREIN-1"/>
    <property type="match status" value="1"/>
</dbReference>
<dbReference type="PANTHER" id="PTHR24271">
    <property type="entry name" value="KALLIKREIN-RELATED"/>
    <property type="match status" value="1"/>
</dbReference>
<dbReference type="Pfam" id="PF00089">
    <property type="entry name" value="Trypsin"/>
    <property type="match status" value="1"/>
</dbReference>
<dbReference type="PRINTS" id="PR00722">
    <property type="entry name" value="CHYMOTRYPSIN"/>
</dbReference>
<dbReference type="SMART" id="SM00020">
    <property type="entry name" value="Tryp_SPc"/>
    <property type="match status" value="1"/>
</dbReference>
<dbReference type="SUPFAM" id="SSF50494">
    <property type="entry name" value="Trypsin-like serine proteases"/>
    <property type="match status" value="1"/>
</dbReference>
<dbReference type="PROSITE" id="PS50240">
    <property type="entry name" value="TRYPSIN_DOM"/>
    <property type="match status" value="1"/>
</dbReference>
<dbReference type="PROSITE" id="PS00134">
    <property type="entry name" value="TRYPSIN_HIS"/>
    <property type="match status" value="1"/>
</dbReference>
<dbReference type="PROSITE" id="PS00135">
    <property type="entry name" value="TRYPSIN_SER"/>
    <property type="match status" value="1"/>
</dbReference>